<reference key="1">
    <citation type="journal article" date="1996" name="DNA Res.">
        <title>Sequence analysis of the genome of the unicellular cyanobacterium Synechocystis sp. strain PCC6803. II. Sequence determination of the entire genome and assignment of potential protein-coding regions.</title>
        <authorList>
            <person name="Kaneko T."/>
            <person name="Sato S."/>
            <person name="Kotani H."/>
            <person name="Tanaka A."/>
            <person name="Asamizu E."/>
            <person name="Nakamura Y."/>
            <person name="Miyajima N."/>
            <person name="Hirosawa M."/>
            <person name="Sugiura M."/>
            <person name="Sasamoto S."/>
            <person name="Kimura T."/>
            <person name="Hosouchi T."/>
            <person name="Matsuno A."/>
            <person name="Muraki A."/>
            <person name="Nakazaki N."/>
            <person name="Naruo K."/>
            <person name="Okumura S."/>
            <person name="Shimpo S."/>
            <person name="Takeuchi C."/>
            <person name="Wada T."/>
            <person name="Watanabe A."/>
            <person name="Yamada M."/>
            <person name="Yasuda M."/>
            <person name="Tabata S."/>
        </authorList>
    </citation>
    <scope>NUCLEOTIDE SEQUENCE [LARGE SCALE GENOMIC DNA]</scope>
    <source>
        <strain>ATCC 27184 / PCC 6803 / Kazusa</strain>
    </source>
</reference>
<organism>
    <name type="scientific">Synechocystis sp. (strain ATCC 27184 / PCC 6803 / Kazusa)</name>
    <dbReference type="NCBI Taxonomy" id="1111708"/>
    <lineage>
        <taxon>Bacteria</taxon>
        <taxon>Bacillati</taxon>
        <taxon>Cyanobacteriota</taxon>
        <taxon>Cyanophyceae</taxon>
        <taxon>Synechococcales</taxon>
        <taxon>Merismopediaceae</taxon>
        <taxon>Synechocystis</taxon>
    </lineage>
</organism>
<gene>
    <name evidence="1" type="primary">prmA</name>
    <name type="ordered locus">sll1909</name>
</gene>
<sequence>MAAANSWWEIRILCHPSLEETAFWRLEKFGCLGTSTEKKAHSLLVRGYLPQEKAEILDLAALALWCEQDALLFQVPKPRFHWQLIDEEDWSISWKEHWQPTPVGDRFIIYPAWIDPPENSDRLILRLDPGVAFGTGTHATTQLCLESLEMRVEPDKHQVLADLGCGSGILGIGAVLLGAAKVYGVDNDPLTVESARHNRHLNQIHPDNLVINEGSVPELEQLIAEPVDGIICNILAEVIVDLLPQFTPLVKPHGWAILSGIMVEQSQAIADALEQNGWTVVAIWKRQEWCCFQARREEGD</sequence>
<dbReference type="EC" id="2.1.1.-" evidence="1"/>
<dbReference type="EMBL" id="BA000022">
    <property type="protein sequence ID" value="BAA17877.1"/>
    <property type="molecule type" value="Genomic_DNA"/>
</dbReference>
<dbReference type="PIR" id="S75015">
    <property type="entry name" value="S75015"/>
</dbReference>
<dbReference type="SMR" id="P73820"/>
<dbReference type="FunCoup" id="P73820">
    <property type="interactions" value="299"/>
</dbReference>
<dbReference type="IntAct" id="P73820">
    <property type="interactions" value="1"/>
</dbReference>
<dbReference type="STRING" id="1148.gene:10498746"/>
<dbReference type="PaxDb" id="1148-1652960"/>
<dbReference type="EnsemblBacteria" id="BAA17877">
    <property type="protein sequence ID" value="BAA17877"/>
    <property type="gene ID" value="BAA17877"/>
</dbReference>
<dbReference type="KEGG" id="syn:sll1909"/>
<dbReference type="eggNOG" id="COG2264">
    <property type="taxonomic scope" value="Bacteria"/>
</dbReference>
<dbReference type="InParanoid" id="P73820"/>
<dbReference type="PhylomeDB" id="P73820"/>
<dbReference type="Proteomes" id="UP000001425">
    <property type="component" value="Chromosome"/>
</dbReference>
<dbReference type="GO" id="GO:0005737">
    <property type="term" value="C:cytoplasm"/>
    <property type="evidence" value="ECO:0007669"/>
    <property type="project" value="UniProtKB-SubCell"/>
</dbReference>
<dbReference type="GO" id="GO:0008276">
    <property type="term" value="F:protein methyltransferase activity"/>
    <property type="evidence" value="ECO:0000318"/>
    <property type="project" value="GO_Central"/>
</dbReference>
<dbReference type="GO" id="GO:0016279">
    <property type="term" value="F:protein-lysine N-methyltransferase activity"/>
    <property type="evidence" value="ECO:0007669"/>
    <property type="project" value="RHEA"/>
</dbReference>
<dbReference type="GO" id="GO:0032259">
    <property type="term" value="P:methylation"/>
    <property type="evidence" value="ECO:0007669"/>
    <property type="project" value="UniProtKB-KW"/>
</dbReference>
<dbReference type="CDD" id="cd02440">
    <property type="entry name" value="AdoMet_MTases"/>
    <property type="match status" value="1"/>
</dbReference>
<dbReference type="Gene3D" id="3.40.50.150">
    <property type="entry name" value="Vaccinia Virus protein VP39"/>
    <property type="match status" value="1"/>
</dbReference>
<dbReference type="HAMAP" id="MF_00735">
    <property type="entry name" value="Methyltr_PrmA"/>
    <property type="match status" value="1"/>
</dbReference>
<dbReference type="InterPro" id="IPR050078">
    <property type="entry name" value="Ribosomal_L11_MeTrfase_PrmA"/>
</dbReference>
<dbReference type="InterPro" id="IPR004498">
    <property type="entry name" value="Ribosomal_PrmA_MeTrfase"/>
</dbReference>
<dbReference type="InterPro" id="IPR029063">
    <property type="entry name" value="SAM-dependent_MTases_sf"/>
</dbReference>
<dbReference type="NCBIfam" id="TIGR00406">
    <property type="entry name" value="prmA"/>
    <property type="match status" value="1"/>
</dbReference>
<dbReference type="PANTHER" id="PTHR43648">
    <property type="entry name" value="ELECTRON TRANSFER FLAVOPROTEIN BETA SUBUNIT LYSINE METHYLTRANSFERASE"/>
    <property type="match status" value="1"/>
</dbReference>
<dbReference type="PANTHER" id="PTHR43648:SF1">
    <property type="entry name" value="ELECTRON TRANSFER FLAVOPROTEIN BETA SUBUNIT LYSINE METHYLTRANSFERASE"/>
    <property type="match status" value="1"/>
</dbReference>
<dbReference type="Pfam" id="PF06325">
    <property type="entry name" value="PrmA"/>
    <property type="match status" value="1"/>
</dbReference>
<dbReference type="PIRSF" id="PIRSF000401">
    <property type="entry name" value="RPL11_MTase"/>
    <property type="match status" value="1"/>
</dbReference>
<dbReference type="SUPFAM" id="SSF53335">
    <property type="entry name" value="S-adenosyl-L-methionine-dependent methyltransferases"/>
    <property type="match status" value="1"/>
</dbReference>
<keyword id="KW-0963">Cytoplasm</keyword>
<keyword id="KW-0489">Methyltransferase</keyword>
<keyword id="KW-1185">Reference proteome</keyword>
<keyword id="KW-0949">S-adenosyl-L-methionine</keyword>
<keyword id="KW-0808">Transferase</keyword>
<comment type="function">
    <text evidence="1">Methylates ribosomal protein L11.</text>
</comment>
<comment type="catalytic activity">
    <reaction evidence="1">
        <text>L-lysyl-[protein] + 3 S-adenosyl-L-methionine = N(6),N(6),N(6)-trimethyl-L-lysyl-[protein] + 3 S-adenosyl-L-homocysteine + 3 H(+)</text>
        <dbReference type="Rhea" id="RHEA:54192"/>
        <dbReference type="Rhea" id="RHEA-COMP:9752"/>
        <dbReference type="Rhea" id="RHEA-COMP:13826"/>
        <dbReference type="ChEBI" id="CHEBI:15378"/>
        <dbReference type="ChEBI" id="CHEBI:29969"/>
        <dbReference type="ChEBI" id="CHEBI:57856"/>
        <dbReference type="ChEBI" id="CHEBI:59789"/>
        <dbReference type="ChEBI" id="CHEBI:61961"/>
    </reaction>
</comment>
<comment type="subcellular location">
    <subcellularLocation>
        <location evidence="1">Cytoplasm</location>
    </subcellularLocation>
</comment>
<comment type="similarity">
    <text evidence="1 2">Belongs to the methyltransferase superfamily. PrmA family.</text>
</comment>
<proteinExistence type="inferred from homology"/>
<evidence type="ECO:0000255" key="1">
    <source>
        <dbReference type="HAMAP-Rule" id="MF_00735"/>
    </source>
</evidence>
<evidence type="ECO:0000305" key="2"/>
<feature type="chain" id="PRO_0000192325" description="Ribosomal protein L11 methyltransferase">
    <location>
        <begin position="1"/>
        <end position="300"/>
    </location>
</feature>
<feature type="binding site" evidence="1">
    <location>
        <position position="141"/>
    </location>
    <ligand>
        <name>S-adenosyl-L-methionine</name>
        <dbReference type="ChEBI" id="CHEBI:59789"/>
    </ligand>
</feature>
<feature type="binding site" evidence="1">
    <location>
        <position position="164"/>
    </location>
    <ligand>
        <name>S-adenosyl-L-methionine</name>
        <dbReference type="ChEBI" id="CHEBI:59789"/>
    </ligand>
</feature>
<feature type="binding site" evidence="1">
    <location>
        <position position="186"/>
    </location>
    <ligand>
        <name>S-adenosyl-L-methionine</name>
        <dbReference type="ChEBI" id="CHEBI:59789"/>
    </ligand>
</feature>
<feature type="binding site" evidence="1">
    <location>
        <position position="233"/>
    </location>
    <ligand>
        <name>S-adenosyl-L-methionine</name>
        <dbReference type="ChEBI" id="CHEBI:59789"/>
    </ligand>
</feature>
<accession>P73820</accession>
<name>PRMA_SYNY3</name>
<protein>
    <recommendedName>
        <fullName evidence="1">Ribosomal protein L11 methyltransferase</fullName>
        <shortName evidence="1">L11 Mtase</shortName>
        <ecNumber evidence="1">2.1.1.-</ecNumber>
    </recommendedName>
</protein>